<name>RAS2_DROME</name>
<gene>
    <name type="primary">Ras64B</name>
    <name type="synonym">ras2</name>
    <name type="ORF">CG1167</name>
</gene>
<comment type="function">
    <text>May be involved in endocytic processes and/or other transport pathways mediated by vesicle trafficking. May interact functionally with ROP protein. Ras proteins bind GDP/GTP and possess intrinsic GTPase activity.</text>
</comment>
<comment type="catalytic activity">
    <reaction evidence="2">
        <text>GTP + H2O = GDP + phosphate + H(+)</text>
        <dbReference type="Rhea" id="RHEA:19669"/>
        <dbReference type="ChEBI" id="CHEBI:15377"/>
        <dbReference type="ChEBI" id="CHEBI:15378"/>
        <dbReference type="ChEBI" id="CHEBI:37565"/>
        <dbReference type="ChEBI" id="CHEBI:43474"/>
        <dbReference type="ChEBI" id="CHEBI:58189"/>
        <dbReference type="EC" id="3.6.5.2"/>
    </reaction>
</comment>
<comment type="activity regulation">
    <text>Alternates between an inactive form bound to GDP and an active form bound to GTP. Activated by a guanine nucleotide-exchange factor (GEF) and inactivated by a GTPase-activating protein (GAP).</text>
</comment>
<comment type="subunit">
    <text evidence="5">Interacts with hzg.</text>
</comment>
<comment type="subcellular location">
    <subcellularLocation>
        <location evidence="6">Cell membrane</location>
        <topology evidence="6">Lipid-anchor</topology>
        <orientation evidence="6">Cytoplasmic side</orientation>
    </subcellularLocation>
</comment>
<comment type="developmental stage">
    <text>A uniform expression is seen in unfertilized eggs, embryos, larvae, pupae and adult flies. Expression during embryogenesis is restricted to the CNS and the Garland cells, a small group of nephrocytes that takes up waste materials from the hemolymph by endocytosis. In post-embryonic stages, expression is seen in the larval salivary glands and the CNS, and in the adult CNS and reproductive systems.</text>
</comment>
<comment type="similarity">
    <text evidence="6">Belongs to the small GTPase superfamily. Ras family.</text>
</comment>
<comment type="sequence caution" evidence="6">
    <conflict type="erroneous initiation">
        <sequence resource="EMBL-CDS" id="CAA31071"/>
    </conflict>
</comment>
<organism>
    <name type="scientific">Drosophila melanogaster</name>
    <name type="common">Fruit fly</name>
    <dbReference type="NCBI Taxonomy" id="7227"/>
    <lineage>
        <taxon>Eukaryota</taxon>
        <taxon>Metazoa</taxon>
        <taxon>Ecdysozoa</taxon>
        <taxon>Arthropoda</taxon>
        <taxon>Hexapoda</taxon>
        <taxon>Insecta</taxon>
        <taxon>Pterygota</taxon>
        <taxon>Neoptera</taxon>
        <taxon>Endopterygota</taxon>
        <taxon>Diptera</taxon>
        <taxon>Brachycera</taxon>
        <taxon>Muscomorpha</taxon>
        <taxon>Ephydroidea</taxon>
        <taxon>Drosophilidae</taxon>
        <taxon>Drosophila</taxon>
        <taxon>Sophophora</taxon>
    </lineage>
</organism>
<proteinExistence type="evidence at protein level"/>
<evidence type="ECO:0000250" key="1"/>
<evidence type="ECO:0000250" key="2">
    <source>
        <dbReference type="UniProtKB" id="P01112"/>
    </source>
</evidence>
<evidence type="ECO:0000269" key="3">
    <source>
    </source>
</evidence>
<evidence type="ECO:0000269" key="4">
    <source>
    </source>
</evidence>
<evidence type="ECO:0000269" key="5">
    <source>
    </source>
</evidence>
<evidence type="ECO:0000305" key="6"/>
<keyword id="KW-1003">Cell membrane</keyword>
<keyword id="KW-0342">GTP-binding</keyword>
<keyword id="KW-0378">Hydrolase</keyword>
<keyword id="KW-0449">Lipoprotein</keyword>
<keyword id="KW-0472">Membrane</keyword>
<keyword id="KW-0488">Methylation</keyword>
<keyword id="KW-0547">Nucleotide-binding</keyword>
<keyword id="KW-0564">Palmitate</keyword>
<keyword id="KW-0636">Prenylation</keyword>
<keyword id="KW-1185">Reference proteome</keyword>
<dbReference type="EC" id="3.6.5.2" evidence="2"/>
<dbReference type="EMBL" id="M10804">
    <property type="protein sequence ID" value="AAA99202.1"/>
    <property type="status" value="ALT_SEQ"/>
    <property type="molecule type" value="Genomic_DNA"/>
</dbReference>
<dbReference type="EMBL" id="M10759">
    <property type="protein sequence ID" value="AAA99202.1"/>
    <property type="status" value="JOINED"/>
    <property type="molecule type" value="Genomic_DNA"/>
</dbReference>
<dbReference type="EMBL" id="M10803">
    <property type="protein sequence ID" value="AAA99202.1"/>
    <property type="status" value="JOINED"/>
    <property type="molecule type" value="Genomic_DNA"/>
</dbReference>
<dbReference type="EMBL" id="M16431">
    <property type="protein sequence ID" value="AAA28849.1"/>
    <property type="molecule type" value="Genomic_DNA"/>
</dbReference>
<dbReference type="EMBL" id="M16124">
    <property type="protein sequence ID" value="AAA28849.1"/>
    <property type="status" value="JOINED"/>
    <property type="molecule type" value="Genomic_DNA"/>
</dbReference>
<dbReference type="EMBL" id="M16430">
    <property type="protein sequence ID" value="AAA28849.1"/>
    <property type="status" value="JOINED"/>
    <property type="molecule type" value="Genomic_DNA"/>
</dbReference>
<dbReference type="EMBL" id="U15967">
    <property type="protein sequence ID" value="AAB60243.1"/>
    <property type="molecule type" value="Genomic_DNA"/>
</dbReference>
<dbReference type="EMBL" id="AE014296">
    <property type="protein sequence ID" value="AAF47845.2"/>
    <property type="molecule type" value="Genomic_DNA"/>
</dbReference>
<dbReference type="EMBL" id="AY119135">
    <property type="protein sequence ID" value="AAM50995.1"/>
    <property type="molecule type" value="mRNA"/>
</dbReference>
<dbReference type="EMBL" id="K01962">
    <property type="protein sequence ID" value="AAA28848.1"/>
    <property type="status" value="ALT_SEQ"/>
    <property type="molecule type" value="Genomic_DNA"/>
</dbReference>
<dbReference type="EMBL" id="K01961">
    <property type="protein sequence ID" value="AAA28848.1"/>
    <property type="status" value="JOINED"/>
    <property type="molecule type" value="Genomic_DNA"/>
</dbReference>
<dbReference type="EMBL" id="AF186651">
    <property type="protein sequence ID" value="AAF15517.1"/>
    <property type="molecule type" value="Genomic_DNA"/>
</dbReference>
<dbReference type="EMBL" id="X12559">
    <property type="protein sequence ID" value="CAA31072.1"/>
    <property type="molecule type" value="Genomic_DNA"/>
</dbReference>
<dbReference type="EMBL" id="X12558">
    <property type="protein sequence ID" value="CAA31071.1"/>
    <property type="status" value="ALT_INIT"/>
    <property type="molecule type" value="Genomic_DNA"/>
</dbReference>
<dbReference type="EMBL" id="X07255">
    <property type="protein sequence ID" value="CAA30242.1"/>
    <property type="molecule type" value="Genomic_DNA"/>
</dbReference>
<dbReference type="PIR" id="A01370">
    <property type="entry name" value="TVFFR"/>
</dbReference>
<dbReference type="PIR" id="S55022">
    <property type="entry name" value="S55022"/>
</dbReference>
<dbReference type="RefSeq" id="NP_523917.2">
    <property type="nucleotide sequence ID" value="NM_079193.4"/>
</dbReference>
<dbReference type="SMR" id="P04388"/>
<dbReference type="BioGRID" id="63974">
    <property type="interactions" value="22"/>
</dbReference>
<dbReference type="FunCoup" id="P04388">
    <property type="interactions" value="717"/>
</dbReference>
<dbReference type="IntAct" id="P04388">
    <property type="interactions" value="7"/>
</dbReference>
<dbReference type="STRING" id="7227.FBpp0073068"/>
<dbReference type="SwissPalm" id="P04388"/>
<dbReference type="PaxDb" id="7227-FBpp0073068"/>
<dbReference type="EnsemblMetazoa" id="FBtr0073212">
    <property type="protein sequence ID" value="FBpp0073068"/>
    <property type="gene ID" value="FBgn0003206"/>
</dbReference>
<dbReference type="GeneID" id="38494"/>
<dbReference type="KEGG" id="dme:Dmel_CG1167"/>
<dbReference type="AGR" id="FB:FBgn0003206"/>
<dbReference type="CTD" id="38494"/>
<dbReference type="FlyBase" id="FBgn0003206">
    <property type="gene designation" value="Ras64B"/>
</dbReference>
<dbReference type="VEuPathDB" id="VectorBase:FBgn0003206"/>
<dbReference type="eggNOG" id="KOG0395">
    <property type="taxonomic scope" value="Eukaryota"/>
</dbReference>
<dbReference type="GeneTree" id="ENSGT00940000160972"/>
<dbReference type="HOGENOM" id="CLU_041217_9_8_1"/>
<dbReference type="InParanoid" id="P04388"/>
<dbReference type="OMA" id="QCVIDDI"/>
<dbReference type="OrthoDB" id="5976022at2759"/>
<dbReference type="PhylomeDB" id="P04388"/>
<dbReference type="BioGRID-ORCS" id="38494">
    <property type="hits" value="0 hits in 3 CRISPR screens"/>
</dbReference>
<dbReference type="GenomeRNAi" id="38494"/>
<dbReference type="PRO" id="PR:P04388"/>
<dbReference type="Proteomes" id="UP000000803">
    <property type="component" value="Chromosome 3L"/>
</dbReference>
<dbReference type="Bgee" id="FBgn0003206">
    <property type="expression patterns" value="Expressed in crop (Drosophila) and 153 other cell types or tissues"/>
</dbReference>
<dbReference type="GO" id="GO:0005886">
    <property type="term" value="C:plasma membrane"/>
    <property type="evidence" value="ECO:0000318"/>
    <property type="project" value="GO_Central"/>
</dbReference>
<dbReference type="GO" id="GO:0003925">
    <property type="term" value="F:G protein activity"/>
    <property type="evidence" value="ECO:0007669"/>
    <property type="project" value="UniProtKB-EC"/>
</dbReference>
<dbReference type="GO" id="GO:0019003">
    <property type="term" value="F:GDP binding"/>
    <property type="evidence" value="ECO:0000318"/>
    <property type="project" value="GO_Central"/>
</dbReference>
<dbReference type="GO" id="GO:0005525">
    <property type="term" value="F:GTP binding"/>
    <property type="evidence" value="ECO:0000318"/>
    <property type="project" value="GO_Central"/>
</dbReference>
<dbReference type="GO" id="GO:0003924">
    <property type="term" value="F:GTPase activity"/>
    <property type="evidence" value="ECO:0000318"/>
    <property type="project" value="GO_Central"/>
</dbReference>
<dbReference type="GO" id="GO:0007265">
    <property type="term" value="P:Ras protein signal transduction"/>
    <property type="evidence" value="ECO:0000250"/>
    <property type="project" value="FlyBase"/>
</dbReference>
<dbReference type="CDD" id="cd04145">
    <property type="entry name" value="M_R_Ras_like"/>
    <property type="match status" value="1"/>
</dbReference>
<dbReference type="FunFam" id="3.40.50.300:FF:000080">
    <property type="entry name" value="Ras-like GTPase Ras1"/>
    <property type="match status" value="1"/>
</dbReference>
<dbReference type="Gene3D" id="3.40.50.300">
    <property type="entry name" value="P-loop containing nucleotide triphosphate hydrolases"/>
    <property type="match status" value="1"/>
</dbReference>
<dbReference type="InterPro" id="IPR027417">
    <property type="entry name" value="P-loop_NTPase"/>
</dbReference>
<dbReference type="InterPro" id="IPR005225">
    <property type="entry name" value="Small_GTP-bd"/>
</dbReference>
<dbReference type="InterPro" id="IPR001806">
    <property type="entry name" value="Small_GTPase"/>
</dbReference>
<dbReference type="InterPro" id="IPR020849">
    <property type="entry name" value="Small_GTPase_Ras-type"/>
</dbReference>
<dbReference type="NCBIfam" id="TIGR00231">
    <property type="entry name" value="small_GTP"/>
    <property type="match status" value="1"/>
</dbReference>
<dbReference type="PANTHER" id="PTHR24070">
    <property type="entry name" value="RAS, DI-RAS, AND RHEB FAMILY MEMBERS OF SMALL GTPASE SUPERFAMILY"/>
    <property type="match status" value="1"/>
</dbReference>
<dbReference type="Pfam" id="PF00071">
    <property type="entry name" value="Ras"/>
    <property type="match status" value="1"/>
</dbReference>
<dbReference type="PRINTS" id="PR00449">
    <property type="entry name" value="RASTRNSFRMNG"/>
</dbReference>
<dbReference type="SMART" id="SM00175">
    <property type="entry name" value="RAB"/>
    <property type="match status" value="1"/>
</dbReference>
<dbReference type="SMART" id="SM00176">
    <property type="entry name" value="RAN"/>
    <property type="match status" value="1"/>
</dbReference>
<dbReference type="SMART" id="SM00173">
    <property type="entry name" value="RAS"/>
    <property type="match status" value="1"/>
</dbReference>
<dbReference type="SMART" id="SM00174">
    <property type="entry name" value="RHO"/>
    <property type="match status" value="1"/>
</dbReference>
<dbReference type="SUPFAM" id="SSF52540">
    <property type="entry name" value="P-loop containing nucleoside triphosphate hydrolases"/>
    <property type="match status" value="1"/>
</dbReference>
<dbReference type="PROSITE" id="PS51421">
    <property type="entry name" value="RAS"/>
    <property type="match status" value="1"/>
</dbReference>
<reference key="1">
    <citation type="journal article" date="1985" name="Mol. Cell. Biol.">
        <title>Characterization and developmental expression of a Drosophila ras oncogene.</title>
        <authorList>
            <person name="Mozer B."/>
            <person name="Marlor R."/>
            <person name="Parkhusrt S."/>
            <person name="Corces V.G."/>
        </authorList>
    </citation>
    <scope>NUCLEOTIDE SEQUENCE [GENOMIC DNA]</scope>
</reference>
<reference key="2">
    <citation type="journal article" date="1987" name="Gene">
        <title>Sequence and genomic structure of ras homologues Dmras85D and Dmras64B of Drosophila melanogaster.</title>
        <authorList>
            <person name="Brock H.W."/>
        </authorList>
    </citation>
    <scope>NUCLEOTIDE SEQUENCE [GENOMIC DNA]</scope>
</reference>
<reference key="3">
    <citation type="journal article" date="1995" name="Genetics">
        <title>A genetic analysis of the 63E-64A genomic region of Drosophila melanogaster: identification of mutations in a replication factor C subunit.</title>
        <authorList>
            <person name="Harrison S.D."/>
            <person name="Solomon N."/>
            <person name="Rubin G.M."/>
        </authorList>
    </citation>
    <scope>NUCLEOTIDE SEQUENCE [GENOMIC DNA]</scope>
    <source>
        <strain>Iso-1 / Kennison</strain>
    </source>
</reference>
<reference key="4">
    <citation type="journal article" date="2000" name="Science">
        <title>The genome sequence of Drosophila melanogaster.</title>
        <authorList>
            <person name="Adams M.D."/>
            <person name="Celniker S.E."/>
            <person name="Holt R.A."/>
            <person name="Evans C.A."/>
            <person name="Gocayne J.D."/>
            <person name="Amanatides P.G."/>
            <person name="Scherer S.E."/>
            <person name="Li P.W."/>
            <person name="Hoskins R.A."/>
            <person name="Galle R.F."/>
            <person name="George R.A."/>
            <person name="Lewis S.E."/>
            <person name="Richards S."/>
            <person name="Ashburner M."/>
            <person name="Henderson S.N."/>
            <person name="Sutton G.G."/>
            <person name="Wortman J.R."/>
            <person name="Yandell M.D."/>
            <person name="Zhang Q."/>
            <person name="Chen L.X."/>
            <person name="Brandon R.C."/>
            <person name="Rogers Y.-H.C."/>
            <person name="Blazej R.G."/>
            <person name="Champe M."/>
            <person name="Pfeiffer B.D."/>
            <person name="Wan K.H."/>
            <person name="Doyle C."/>
            <person name="Baxter E.G."/>
            <person name="Helt G."/>
            <person name="Nelson C.R."/>
            <person name="Miklos G.L.G."/>
            <person name="Abril J.F."/>
            <person name="Agbayani A."/>
            <person name="An H.-J."/>
            <person name="Andrews-Pfannkoch C."/>
            <person name="Baldwin D."/>
            <person name="Ballew R.M."/>
            <person name="Basu A."/>
            <person name="Baxendale J."/>
            <person name="Bayraktaroglu L."/>
            <person name="Beasley E.M."/>
            <person name="Beeson K.Y."/>
            <person name="Benos P.V."/>
            <person name="Berman B.P."/>
            <person name="Bhandari D."/>
            <person name="Bolshakov S."/>
            <person name="Borkova D."/>
            <person name="Botchan M.R."/>
            <person name="Bouck J."/>
            <person name="Brokstein P."/>
            <person name="Brottier P."/>
            <person name="Burtis K.C."/>
            <person name="Busam D.A."/>
            <person name="Butler H."/>
            <person name="Cadieu E."/>
            <person name="Center A."/>
            <person name="Chandra I."/>
            <person name="Cherry J.M."/>
            <person name="Cawley S."/>
            <person name="Dahlke C."/>
            <person name="Davenport L.B."/>
            <person name="Davies P."/>
            <person name="de Pablos B."/>
            <person name="Delcher A."/>
            <person name="Deng Z."/>
            <person name="Mays A.D."/>
            <person name="Dew I."/>
            <person name="Dietz S.M."/>
            <person name="Dodson K."/>
            <person name="Doup L.E."/>
            <person name="Downes M."/>
            <person name="Dugan-Rocha S."/>
            <person name="Dunkov B.C."/>
            <person name="Dunn P."/>
            <person name="Durbin K.J."/>
            <person name="Evangelista C.C."/>
            <person name="Ferraz C."/>
            <person name="Ferriera S."/>
            <person name="Fleischmann W."/>
            <person name="Fosler C."/>
            <person name="Gabrielian A.E."/>
            <person name="Garg N.S."/>
            <person name="Gelbart W.M."/>
            <person name="Glasser K."/>
            <person name="Glodek A."/>
            <person name="Gong F."/>
            <person name="Gorrell J.H."/>
            <person name="Gu Z."/>
            <person name="Guan P."/>
            <person name="Harris M."/>
            <person name="Harris N.L."/>
            <person name="Harvey D.A."/>
            <person name="Heiman T.J."/>
            <person name="Hernandez J.R."/>
            <person name="Houck J."/>
            <person name="Hostin D."/>
            <person name="Houston K.A."/>
            <person name="Howland T.J."/>
            <person name="Wei M.-H."/>
            <person name="Ibegwam C."/>
            <person name="Jalali M."/>
            <person name="Kalush F."/>
            <person name="Karpen G.H."/>
            <person name="Ke Z."/>
            <person name="Kennison J.A."/>
            <person name="Ketchum K.A."/>
            <person name="Kimmel B.E."/>
            <person name="Kodira C.D."/>
            <person name="Kraft C.L."/>
            <person name="Kravitz S."/>
            <person name="Kulp D."/>
            <person name="Lai Z."/>
            <person name="Lasko P."/>
            <person name="Lei Y."/>
            <person name="Levitsky A.A."/>
            <person name="Li J.H."/>
            <person name="Li Z."/>
            <person name="Liang Y."/>
            <person name="Lin X."/>
            <person name="Liu X."/>
            <person name="Mattei B."/>
            <person name="McIntosh T.C."/>
            <person name="McLeod M.P."/>
            <person name="McPherson D."/>
            <person name="Merkulov G."/>
            <person name="Milshina N.V."/>
            <person name="Mobarry C."/>
            <person name="Morris J."/>
            <person name="Moshrefi A."/>
            <person name="Mount S.M."/>
            <person name="Moy M."/>
            <person name="Murphy B."/>
            <person name="Murphy L."/>
            <person name="Muzny D.M."/>
            <person name="Nelson D.L."/>
            <person name="Nelson D.R."/>
            <person name="Nelson K.A."/>
            <person name="Nixon K."/>
            <person name="Nusskern D.R."/>
            <person name="Pacleb J.M."/>
            <person name="Palazzolo M."/>
            <person name="Pittman G.S."/>
            <person name="Pan S."/>
            <person name="Pollard J."/>
            <person name="Puri V."/>
            <person name="Reese M.G."/>
            <person name="Reinert K."/>
            <person name="Remington K."/>
            <person name="Saunders R.D.C."/>
            <person name="Scheeler F."/>
            <person name="Shen H."/>
            <person name="Shue B.C."/>
            <person name="Siden-Kiamos I."/>
            <person name="Simpson M."/>
            <person name="Skupski M.P."/>
            <person name="Smith T.J."/>
            <person name="Spier E."/>
            <person name="Spradling A.C."/>
            <person name="Stapleton M."/>
            <person name="Strong R."/>
            <person name="Sun E."/>
            <person name="Svirskas R."/>
            <person name="Tector C."/>
            <person name="Turner R."/>
            <person name="Venter E."/>
            <person name="Wang A.H."/>
            <person name="Wang X."/>
            <person name="Wang Z.-Y."/>
            <person name="Wassarman D.A."/>
            <person name="Weinstock G.M."/>
            <person name="Weissenbach J."/>
            <person name="Williams S.M."/>
            <person name="Woodage T."/>
            <person name="Worley K.C."/>
            <person name="Wu D."/>
            <person name="Yang S."/>
            <person name="Yao Q.A."/>
            <person name="Ye J."/>
            <person name="Yeh R.-F."/>
            <person name="Zaveri J.S."/>
            <person name="Zhan M."/>
            <person name="Zhang G."/>
            <person name="Zhao Q."/>
            <person name="Zheng L."/>
            <person name="Zheng X.H."/>
            <person name="Zhong F.N."/>
            <person name="Zhong W."/>
            <person name="Zhou X."/>
            <person name="Zhu S.C."/>
            <person name="Zhu X."/>
            <person name="Smith H.O."/>
            <person name="Gibbs R.A."/>
            <person name="Myers E.W."/>
            <person name="Rubin G.M."/>
            <person name="Venter J.C."/>
        </authorList>
    </citation>
    <scope>NUCLEOTIDE SEQUENCE [LARGE SCALE GENOMIC DNA]</scope>
    <source>
        <strain>Berkeley</strain>
    </source>
</reference>
<reference key="5">
    <citation type="journal article" date="2002" name="Genome Biol.">
        <title>Annotation of the Drosophila melanogaster euchromatic genome: a systematic review.</title>
        <authorList>
            <person name="Misra S."/>
            <person name="Crosby M.A."/>
            <person name="Mungall C.J."/>
            <person name="Matthews B.B."/>
            <person name="Campbell K.S."/>
            <person name="Hradecky P."/>
            <person name="Huang Y."/>
            <person name="Kaminker J.S."/>
            <person name="Millburn G.H."/>
            <person name="Prochnik S.E."/>
            <person name="Smith C.D."/>
            <person name="Tupy J.L."/>
            <person name="Whitfield E.J."/>
            <person name="Bayraktaroglu L."/>
            <person name="Berman B.P."/>
            <person name="Bettencourt B.R."/>
            <person name="Celniker S.E."/>
            <person name="de Grey A.D.N.J."/>
            <person name="Drysdale R.A."/>
            <person name="Harris N.L."/>
            <person name="Richter J."/>
            <person name="Russo S."/>
            <person name="Schroeder A.J."/>
            <person name="Shu S.Q."/>
            <person name="Stapleton M."/>
            <person name="Yamada C."/>
            <person name="Ashburner M."/>
            <person name="Gelbart W.M."/>
            <person name="Rubin G.M."/>
            <person name="Lewis S.E."/>
        </authorList>
    </citation>
    <scope>GENOME REANNOTATION</scope>
    <source>
        <strain>Berkeley</strain>
    </source>
</reference>
<reference key="6">
    <citation type="journal article" date="2002" name="Genome Biol.">
        <title>A Drosophila full-length cDNA resource.</title>
        <authorList>
            <person name="Stapleton M."/>
            <person name="Carlson J.W."/>
            <person name="Brokstein P."/>
            <person name="Yu C."/>
            <person name="Champe M."/>
            <person name="George R.A."/>
            <person name="Guarin H."/>
            <person name="Kronmiller B."/>
            <person name="Pacleb J.M."/>
            <person name="Park S."/>
            <person name="Wan K.H."/>
            <person name="Rubin G.M."/>
            <person name="Celniker S.E."/>
        </authorList>
    </citation>
    <scope>NUCLEOTIDE SEQUENCE [LARGE SCALE MRNA]</scope>
    <source>
        <strain>Berkeley</strain>
        <tissue>Embryo</tissue>
    </source>
</reference>
<reference key="7">
    <citation type="journal article" date="1984" name="Cell">
        <title>The Drosophila ras oncogenes: structure and nucleotide sequence.</title>
        <authorList>
            <person name="Neuman-Silberberg F.S."/>
            <person name="Schejter E."/>
            <person name="Hoffmann F.M."/>
            <person name="Shilo B.-Z."/>
        </authorList>
    </citation>
    <scope>NUCLEOTIDE SEQUENCE [GENOMIC DNA] OF 28-192</scope>
</reference>
<reference key="8">
    <citation type="journal article" date="1999" name="J. Mol. Evol.">
        <title>Absence of protein polymorphism in the Ras genes of Drosophila melanogaster.</title>
        <authorList>
            <person name="Gasperini R."/>
            <person name="Gibson G."/>
        </authorList>
    </citation>
    <scope>NUCLEOTIDE SEQUENCE [GENOMIC DNA] OF 28-192</scope>
    <source>
        <strain>A1</strain>
    </source>
</reference>
<reference key="9">
    <citation type="journal article" date="1988" name="Genes Dev.">
        <title>Expression of an activated ras gene causes developmental abnormalities in transgenic Drosophila melanogaster.</title>
        <authorList>
            <person name="Bishop J.G. III"/>
            <person name="Corces V.G."/>
        </authorList>
    </citation>
    <scope>NUCLEOTIDE SEQUENCE [GENOMIC DNA] OF 1-18 AND 44-64</scope>
    <scope>SPLICE SITES</scope>
    <scope>MUTAGENESIS OF GLY-14</scope>
</reference>
<reference key="10">
    <citation type="journal article" date="1988" name="Oncogene">
        <title>A bidirectional promoter is regulating the Drosophila ras2 gene.</title>
        <authorList>
            <person name="Cohen N."/>
            <person name="Salzberg A."/>
            <person name="Lev Z."/>
        </authorList>
    </citation>
    <scope>NUCLEOTIDE SEQUENCE [GENOMIC DNA] OF 1-29</scope>
</reference>
<reference key="11">
    <citation type="journal article" date="1993" name="Development">
        <title>The Drosophila Ras2 and Rop gene pair: a dual homology with a yeast Ras-like gene and a suppressor of its loss-of-function phenotype.</title>
        <authorList>
            <person name="Salzberg A."/>
            <person name="Cohen N."/>
            <person name="Halachmi N."/>
            <person name="Kimchie Z."/>
            <person name="Lev Z."/>
        </authorList>
    </citation>
    <scope>CHARACTERIZATION</scope>
</reference>
<reference key="12">
    <citation type="journal article" date="2019" name="Cell">
        <title>Amyloid-like Assembly Activates a Phosphatase in the Developing Drosophila Embryo.</title>
        <authorList>
            <person name="Nil Z."/>
            <person name="Hervas R."/>
            <person name="Gerbich T."/>
            <person name="Leal P."/>
            <person name="Yu Z."/>
            <person name="Saraf A."/>
            <person name="Sardiu M."/>
            <person name="Lange J.J."/>
            <person name="Yi K."/>
            <person name="Unruh J."/>
            <person name="Slaughter B."/>
            <person name="Si K."/>
        </authorList>
    </citation>
    <scope>INTERACTION WITH HZG</scope>
</reference>
<reference key="13">
    <citation type="journal article" date="2019" name="PLoS ONE">
        <title>Drosophila ZDHHC8 palmitoylates scribble and Ras64B and controls growth and viability.</title>
        <authorList>
            <person name="Strassburger K."/>
            <person name="Kang E."/>
            <person name="Teleman A.A."/>
        </authorList>
    </citation>
    <scope>PALMITOYLATION AT CYS-46; CYS-120 AND CYS-147</scope>
    <scope>MUTAGENESIS OF CYS-46; CYS-120 AND CYS-147</scope>
</reference>
<accession>P04388</accession>
<accession>Q9VZH7</accession>
<sequence>MQMQTYKLVVVGGGGVGKSAITIQFIQSYFVTDYDPTIEDSYTKQCNIDDVPAKLDILDTAGQEEFSAMREQYMRSGEGFLLVFALNDHSSFDEIPKFQRQILRVKDRDEFPMLMVGNKCDLKHQQQVSLEEAQNTSRNLMIPYIECSAKLRVNVDQAFHELVRIVRKFQIAERPFIEQDYKKKGKRKCCLM</sequence>
<protein>
    <recommendedName>
        <fullName>Ras-like protein 2</fullName>
        <ecNumber evidence="2">3.6.5.2</ecNumber>
    </recommendedName>
</protein>
<feature type="chain" id="PRO_0000082668" description="Ras-like protein 2">
    <location>
        <begin position="1"/>
        <end position="189"/>
    </location>
</feature>
<feature type="propeptide" id="PRO_0000281316" description="Removed in mature form" evidence="1">
    <location>
        <begin position="190"/>
        <end position="192"/>
    </location>
</feature>
<feature type="short sequence motif" description="Effector region">
    <location>
        <begin position="34"/>
        <end position="42"/>
    </location>
</feature>
<feature type="binding site" evidence="1">
    <location>
        <begin position="12"/>
        <end position="19"/>
    </location>
    <ligand>
        <name>GTP</name>
        <dbReference type="ChEBI" id="CHEBI:37565"/>
    </ligand>
</feature>
<feature type="binding site" evidence="1">
    <location>
        <begin position="59"/>
        <end position="63"/>
    </location>
    <ligand>
        <name>GTP</name>
        <dbReference type="ChEBI" id="CHEBI:37565"/>
    </ligand>
</feature>
<feature type="binding site" evidence="1">
    <location>
        <begin position="118"/>
        <end position="121"/>
    </location>
    <ligand>
        <name>GTP</name>
        <dbReference type="ChEBI" id="CHEBI:37565"/>
    </ligand>
</feature>
<feature type="modified residue" description="Cysteine methyl ester" evidence="1">
    <location>
        <position position="189"/>
    </location>
</feature>
<feature type="lipid moiety-binding region" description="S-palmitoyl cysteine" evidence="4">
    <location>
        <position position="46"/>
    </location>
</feature>
<feature type="lipid moiety-binding region" description="S-palmitoyl cysteine" evidence="4">
    <location>
        <position position="120"/>
    </location>
</feature>
<feature type="lipid moiety-binding region" description="S-palmitoyl cysteine" evidence="4">
    <location>
        <position position="147"/>
    </location>
</feature>
<feature type="lipid moiety-binding region" description="S-farnesyl cysteine" evidence="1">
    <location>
        <position position="189"/>
    </location>
</feature>
<feature type="mutagenesis site" description="Causes developmental abnormalities." evidence="3">
    <original>G</original>
    <variation>V</variation>
    <location>
        <position position="14"/>
    </location>
</feature>
<feature type="mutagenesis site" description="Reduces protein stability and palmitoylation. Loss of palmitoylation; when associated with A-120 and A-147." evidence="4">
    <original>C</original>
    <variation>A</variation>
    <location>
        <position position="46"/>
    </location>
</feature>
<feature type="mutagenesis site" description="Reduces palmitoylation. Loss of palmitoylation; when associated with A-120 and A-147." evidence="4">
    <original>C</original>
    <variation>A</variation>
    <location>
        <position position="120"/>
    </location>
</feature>
<feature type="mutagenesis site" description="Reduces palmitoylation. Loss of palmitoylation; when associated with A-120 and A-147." evidence="4">
    <original>C</original>
    <variation>A</variation>
    <location>
        <position position="147"/>
    </location>
</feature>
<feature type="sequence conflict" description="In Ref. 10; CAA30242." evidence="6" ref="10">
    <original>SY</original>
    <variation>VS</variation>
    <location>
        <begin position="28"/>
        <end position="29"/>
    </location>
</feature>